<comment type="function">
    <text evidence="1">Snake venom neurotoxin that blocks neuromuscular transmission, presenting a postsynaptic action through the nicotinic acetylcholine receptor (nAChR). Has no cytotoxic activity.</text>
</comment>
<comment type="subcellular location">
    <subcellularLocation>
        <location evidence="1">Secreted</location>
    </subcellularLocation>
</comment>
<comment type="tissue specificity">
    <text evidence="4">Expressed by the venom gland.</text>
</comment>
<comment type="similarity">
    <text evidence="6">Belongs to the three-finger toxin family. Short-chain subfamily.</text>
</comment>
<feature type="signal peptide" evidence="3">
    <location>
        <begin position="1"/>
        <end position="21"/>
    </location>
</feature>
<feature type="chain" id="PRO_5015126796" description="Mipartoxin-3" evidence="3">
    <location>
        <begin position="22"/>
        <end position="79"/>
    </location>
</feature>
<feature type="disulfide bond" evidence="2">
    <location>
        <begin position="24"/>
        <end position="41"/>
    </location>
</feature>
<feature type="disulfide bond" evidence="2">
    <location>
        <begin position="34"/>
        <end position="59"/>
    </location>
</feature>
<feature type="disulfide bond" evidence="2">
    <location>
        <begin position="63"/>
        <end position="71"/>
    </location>
</feature>
<feature type="disulfide bond" evidence="2">
    <location>
        <begin position="72"/>
        <end position="77"/>
    </location>
</feature>
<protein>
    <recommendedName>
        <fullName evidence="5">Mipartoxin-3</fullName>
    </recommendedName>
    <alternativeName>
        <fullName evidence="7">Mipartoxin-III</fullName>
    </alternativeName>
    <alternativeName>
        <fullName evidence="5">Three-finger toxin-04</fullName>
        <shortName evidence="5">3FTx-04</shortName>
    </alternativeName>
</protein>
<reference evidence="6" key="1">
    <citation type="journal article" date="2019" name="Toxicon">
        <title>Novel three-finger toxins from Micrurus dumerilii and Micrurus mipartitus coral snake venoms: Phylogenetic relationships and characterization of Clarkitoxin-I-Mdum.</title>
        <authorList>
            <person name="Rey-Suarez P."/>
            <person name="Saldarriaga-Cordoba M."/>
            <person name="Torres U."/>
            <person name="Marin-Villa M."/>
            <person name="Lomonte B."/>
            <person name="Nunez V."/>
        </authorList>
    </citation>
    <scope>NUCLEOTIDE SEQUENCE [MRNA]</scope>
    <scope>TISSUE SPECIFICITY</scope>
    <source>
        <tissue evidence="5">Venom gland</tissue>
    </source>
</reference>
<evidence type="ECO:0000250" key="1">
    <source>
        <dbReference type="UniProtKB" id="B3EWF8"/>
    </source>
</evidence>
<evidence type="ECO:0000250" key="2">
    <source>
        <dbReference type="UniProtKB" id="P07526"/>
    </source>
</evidence>
<evidence type="ECO:0000255" key="3"/>
<evidence type="ECO:0000269" key="4">
    <source>
    </source>
</evidence>
<evidence type="ECO:0000303" key="5">
    <source>
    </source>
</evidence>
<evidence type="ECO:0000305" key="6"/>
<evidence type="ECO:0000312" key="7">
    <source>
        <dbReference type="EMBL" id="AVI57322.1"/>
    </source>
</evidence>
<organism evidence="7">
    <name type="scientific">Micrurus mipartitus</name>
    <name type="common">Red-tailed coral snake</name>
    <dbReference type="NCBI Taxonomy" id="430902"/>
    <lineage>
        <taxon>Eukaryota</taxon>
        <taxon>Metazoa</taxon>
        <taxon>Chordata</taxon>
        <taxon>Craniata</taxon>
        <taxon>Vertebrata</taxon>
        <taxon>Euteleostomi</taxon>
        <taxon>Lepidosauria</taxon>
        <taxon>Squamata</taxon>
        <taxon>Bifurcata</taxon>
        <taxon>Unidentata</taxon>
        <taxon>Episquamata</taxon>
        <taxon>Toxicofera</taxon>
        <taxon>Serpentes</taxon>
        <taxon>Colubroidea</taxon>
        <taxon>Elapidae</taxon>
        <taxon>Elapinae</taxon>
        <taxon>Micrurus</taxon>
    </lineage>
</organism>
<sequence>MKTLLLTLVVVTIVCLDLGNSLKCYDKLKKEVTCPEGMKFCHKDVLPATHGNSVLVMGCTYSCGLGPRNMCCSTDLCNK</sequence>
<accession>A0A2P1BSU3</accession>
<keyword id="KW-0008">Acetylcholine receptor inhibiting toxin</keyword>
<keyword id="KW-1015">Disulfide bond</keyword>
<keyword id="KW-0872">Ion channel impairing toxin</keyword>
<keyword id="KW-0528">Neurotoxin</keyword>
<keyword id="KW-0629">Postsynaptic neurotoxin</keyword>
<keyword id="KW-0964">Secreted</keyword>
<keyword id="KW-0732">Signal</keyword>
<keyword id="KW-0800">Toxin</keyword>
<dbReference type="EMBL" id="KY635903">
    <property type="protein sequence ID" value="AVI57322.1"/>
    <property type="molecule type" value="mRNA"/>
</dbReference>
<dbReference type="SMR" id="A0A2P1BSU3"/>
<dbReference type="GO" id="GO:0005576">
    <property type="term" value="C:extracellular region"/>
    <property type="evidence" value="ECO:0007669"/>
    <property type="project" value="UniProtKB-SubCell"/>
</dbReference>
<dbReference type="GO" id="GO:0030550">
    <property type="term" value="F:acetylcholine receptor inhibitor activity"/>
    <property type="evidence" value="ECO:0007669"/>
    <property type="project" value="UniProtKB-KW"/>
</dbReference>
<dbReference type="GO" id="GO:0099106">
    <property type="term" value="F:ion channel regulator activity"/>
    <property type="evidence" value="ECO:0007669"/>
    <property type="project" value="UniProtKB-KW"/>
</dbReference>
<dbReference type="GO" id="GO:0090729">
    <property type="term" value="F:toxin activity"/>
    <property type="evidence" value="ECO:0007669"/>
    <property type="project" value="UniProtKB-KW"/>
</dbReference>
<dbReference type="CDD" id="cd00206">
    <property type="entry name" value="TFP_snake_toxin"/>
    <property type="match status" value="1"/>
</dbReference>
<dbReference type="Gene3D" id="2.10.60.10">
    <property type="entry name" value="CD59"/>
    <property type="match status" value="1"/>
</dbReference>
<dbReference type="InterPro" id="IPR003571">
    <property type="entry name" value="Snake_3FTx"/>
</dbReference>
<dbReference type="InterPro" id="IPR045860">
    <property type="entry name" value="Snake_toxin-like_sf"/>
</dbReference>
<dbReference type="InterPro" id="IPR054131">
    <property type="entry name" value="Toxin_cobra-type"/>
</dbReference>
<dbReference type="Pfam" id="PF21947">
    <property type="entry name" value="Toxin_cobra-type"/>
    <property type="match status" value="1"/>
</dbReference>
<dbReference type="SUPFAM" id="SSF57302">
    <property type="entry name" value="Snake toxin-like"/>
    <property type="match status" value="1"/>
</dbReference>
<proteinExistence type="evidence at transcript level"/>
<name>3SX3_MICMP</name>